<dbReference type="EC" id="1.17.7.3" evidence="1"/>
<dbReference type="EMBL" id="CP000107">
    <property type="protein sequence ID" value="AAZ68508.1"/>
    <property type="molecule type" value="Genomic_DNA"/>
</dbReference>
<dbReference type="RefSeq" id="WP_011304586.1">
    <property type="nucleotide sequence ID" value="NC_007354.1"/>
</dbReference>
<dbReference type="SMR" id="Q3YRZ7"/>
<dbReference type="FunCoup" id="Q3YRZ7">
    <property type="interactions" value="181"/>
</dbReference>
<dbReference type="STRING" id="269484.Ecaj_0471"/>
<dbReference type="KEGG" id="ecn:Ecaj_0471"/>
<dbReference type="eggNOG" id="COG0821">
    <property type="taxonomic scope" value="Bacteria"/>
</dbReference>
<dbReference type="HOGENOM" id="CLU_042258_1_0_5"/>
<dbReference type="InParanoid" id="Q3YRZ7"/>
<dbReference type="UniPathway" id="UPA00056">
    <property type="reaction ID" value="UER00096"/>
</dbReference>
<dbReference type="Proteomes" id="UP000000435">
    <property type="component" value="Chromosome"/>
</dbReference>
<dbReference type="GO" id="GO:0051539">
    <property type="term" value="F:4 iron, 4 sulfur cluster binding"/>
    <property type="evidence" value="ECO:0007669"/>
    <property type="project" value="UniProtKB-UniRule"/>
</dbReference>
<dbReference type="GO" id="GO:0046429">
    <property type="term" value="F:4-hydroxy-3-methylbut-2-en-1-yl diphosphate synthase activity (ferredoxin)"/>
    <property type="evidence" value="ECO:0007669"/>
    <property type="project" value="UniProtKB-UniRule"/>
</dbReference>
<dbReference type="GO" id="GO:0141197">
    <property type="term" value="F:4-hydroxy-3-methylbut-2-enyl-diphosphate synthase activity (flavodoxin)"/>
    <property type="evidence" value="ECO:0007669"/>
    <property type="project" value="UniProtKB-EC"/>
</dbReference>
<dbReference type="GO" id="GO:0005506">
    <property type="term" value="F:iron ion binding"/>
    <property type="evidence" value="ECO:0007669"/>
    <property type="project" value="InterPro"/>
</dbReference>
<dbReference type="GO" id="GO:0019288">
    <property type="term" value="P:isopentenyl diphosphate biosynthetic process, methylerythritol 4-phosphate pathway"/>
    <property type="evidence" value="ECO:0007669"/>
    <property type="project" value="UniProtKB-UniRule"/>
</dbReference>
<dbReference type="GO" id="GO:0016114">
    <property type="term" value="P:terpenoid biosynthetic process"/>
    <property type="evidence" value="ECO:0007669"/>
    <property type="project" value="InterPro"/>
</dbReference>
<dbReference type="FunFam" id="3.30.413.10:FF:000012">
    <property type="entry name" value="4-hydroxy-3-methylbut-2-en-1-yl diphosphate synthase (flavodoxin)"/>
    <property type="match status" value="1"/>
</dbReference>
<dbReference type="Gene3D" id="3.20.20.20">
    <property type="entry name" value="Dihydropteroate synthase-like"/>
    <property type="match status" value="1"/>
</dbReference>
<dbReference type="Gene3D" id="3.30.413.10">
    <property type="entry name" value="Sulfite Reductase Hemoprotein, domain 1"/>
    <property type="match status" value="1"/>
</dbReference>
<dbReference type="HAMAP" id="MF_00159">
    <property type="entry name" value="IspG"/>
    <property type="match status" value="1"/>
</dbReference>
<dbReference type="InterPro" id="IPR011005">
    <property type="entry name" value="Dihydropteroate_synth-like_sf"/>
</dbReference>
<dbReference type="InterPro" id="IPR016425">
    <property type="entry name" value="IspG_bac"/>
</dbReference>
<dbReference type="InterPro" id="IPR004588">
    <property type="entry name" value="IspG_bac-typ"/>
</dbReference>
<dbReference type="InterPro" id="IPR045854">
    <property type="entry name" value="NO2/SO3_Rdtase_4Fe4S_sf"/>
</dbReference>
<dbReference type="NCBIfam" id="TIGR00612">
    <property type="entry name" value="ispG_gcpE"/>
    <property type="match status" value="1"/>
</dbReference>
<dbReference type="NCBIfam" id="NF001540">
    <property type="entry name" value="PRK00366.1"/>
    <property type="match status" value="1"/>
</dbReference>
<dbReference type="PANTHER" id="PTHR30454">
    <property type="entry name" value="4-HYDROXY-3-METHYLBUT-2-EN-1-YL DIPHOSPHATE SYNTHASE"/>
    <property type="match status" value="1"/>
</dbReference>
<dbReference type="PANTHER" id="PTHR30454:SF0">
    <property type="entry name" value="4-HYDROXY-3-METHYLBUT-2-EN-1-YL DIPHOSPHATE SYNTHASE (FERREDOXIN), CHLOROPLASTIC"/>
    <property type="match status" value="1"/>
</dbReference>
<dbReference type="Pfam" id="PF04551">
    <property type="entry name" value="GcpE"/>
    <property type="match status" value="1"/>
</dbReference>
<dbReference type="PIRSF" id="PIRSF004640">
    <property type="entry name" value="IspG"/>
    <property type="match status" value="1"/>
</dbReference>
<feature type="chain" id="PRO_1000011464" description="4-hydroxy-3-methylbut-2-en-1-yl diphosphate synthase (flavodoxin)">
    <location>
        <begin position="1"/>
        <end position="422"/>
    </location>
</feature>
<feature type="binding site" evidence="1">
    <location>
        <position position="316"/>
    </location>
    <ligand>
        <name>[4Fe-4S] cluster</name>
        <dbReference type="ChEBI" id="CHEBI:49883"/>
    </ligand>
</feature>
<feature type="binding site" evidence="1">
    <location>
        <position position="319"/>
    </location>
    <ligand>
        <name>[4Fe-4S] cluster</name>
        <dbReference type="ChEBI" id="CHEBI:49883"/>
    </ligand>
</feature>
<feature type="binding site" evidence="1">
    <location>
        <position position="362"/>
    </location>
    <ligand>
        <name>[4Fe-4S] cluster</name>
        <dbReference type="ChEBI" id="CHEBI:49883"/>
    </ligand>
</feature>
<feature type="binding site" evidence="1">
    <location>
        <position position="369"/>
    </location>
    <ligand>
        <name>[4Fe-4S] cluster</name>
        <dbReference type="ChEBI" id="CHEBI:49883"/>
    </ligand>
</feature>
<proteinExistence type="inferred from homology"/>
<gene>
    <name evidence="1" type="primary">ispG</name>
    <name type="ordered locus">Ecaj_0471</name>
</gene>
<keyword id="KW-0004">4Fe-4S</keyword>
<keyword id="KW-0408">Iron</keyword>
<keyword id="KW-0411">Iron-sulfur</keyword>
<keyword id="KW-0414">Isoprene biosynthesis</keyword>
<keyword id="KW-0479">Metal-binding</keyword>
<keyword id="KW-0560">Oxidoreductase</keyword>
<name>ISPG_EHRCJ</name>
<reference key="1">
    <citation type="journal article" date="2006" name="J. Bacteriol.">
        <title>The genome of the obligately intracellular bacterium Ehrlichia canis reveals themes of complex membrane structure and immune evasion strategies.</title>
        <authorList>
            <person name="Mavromatis K."/>
            <person name="Doyle C.K."/>
            <person name="Lykidis A."/>
            <person name="Ivanova N."/>
            <person name="Francino M.P."/>
            <person name="Chain P."/>
            <person name="Shin M."/>
            <person name="Malfatti S."/>
            <person name="Larimer F."/>
            <person name="Copeland A."/>
            <person name="Detter J.C."/>
            <person name="Land M."/>
            <person name="Richardson P.M."/>
            <person name="Yu X.J."/>
            <person name="Walker D.H."/>
            <person name="McBride J.W."/>
            <person name="Kyrpides N.C."/>
        </authorList>
    </citation>
    <scope>NUCLEOTIDE SEQUENCE [LARGE SCALE GENOMIC DNA]</scope>
    <source>
        <strain>Jake</strain>
    </source>
</reference>
<protein>
    <recommendedName>
        <fullName evidence="1">4-hydroxy-3-methylbut-2-en-1-yl diphosphate synthase (flavodoxin)</fullName>
        <ecNumber evidence="1">1.17.7.3</ecNumber>
    </recommendedName>
    <alternativeName>
        <fullName evidence="1">1-hydroxy-2-methyl-2-(E)-butenyl 4-diphosphate synthase</fullName>
    </alternativeName>
</protein>
<sequence length="422" mass="46098">MECDVINRILNEEDLFDCIKRKSKLTYEVNVGNVIIGGNNPIVVQSMALGGSGDANKDAHEVLELAKAGSELVRVAVNSEQAIKNIPYIRDVLVDNGFDHKMIIGCGQYEIARLVKEYPECASALGKIRINPGNIGFGNKRDKNFEDVIEFAIKYDIPIRIGVNWGSLDKYLASKLMNDNALLSNPKPDYIVLQKALVISAVTSAKRAEEIGLSKNKIVISCKTSKIQDLIPVYTVLSNVCNYPLHLGLTEAGSGIKGVVGSVAGISYLLLNGIGDTIRVSLTQQPGESRTTEVKLCQEILQSIGLKNFNAQVTSCPGCNRTNPKYFHQLVKDVNDYIADRMPVWRNTNPGAKDMVVAVMGCIVNGPGESKHANLGISLPGYGERPVAAVYQDGEKLCTLEGKNIFEQFVSIIENYVSVNYQ</sequence>
<evidence type="ECO:0000255" key="1">
    <source>
        <dbReference type="HAMAP-Rule" id="MF_00159"/>
    </source>
</evidence>
<accession>Q3YRZ7</accession>
<organism>
    <name type="scientific">Ehrlichia canis (strain Jake)</name>
    <dbReference type="NCBI Taxonomy" id="269484"/>
    <lineage>
        <taxon>Bacteria</taxon>
        <taxon>Pseudomonadati</taxon>
        <taxon>Pseudomonadota</taxon>
        <taxon>Alphaproteobacteria</taxon>
        <taxon>Rickettsiales</taxon>
        <taxon>Anaplasmataceae</taxon>
        <taxon>Ehrlichia</taxon>
    </lineage>
</organism>
<comment type="function">
    <text evidence="1">Converts 2C-methyl-D-erythritol 2,4-cyclodiphosphate (ME-2,4cPP) into 1-hydroxy-2-methyl-2-(E)-butenyl 4-diphosphate.</text>
</comment>
<comment type="catalytic activity">
    <reaction evidence="1">
        <text>(2E)-4-hydroxy-3-methylbut-2-enyl diphosphate + oxidized [flavodoxin] + H2O + 2 H(+) = 2-C-methyl-D-erythritol 2,4-cyclic diphosphate + reduced [flavodoxin]</text>
        <dbReference type="Rhea" id="RHEA:43604"/>
        <dbReference type="Rhea" id="RHEA-COMP:10622"/>
        <dbReference type="Rhea" id="RHEA-COMP:10623"/>
        <dbReference type="ChEBI" id="CHEBI:15377"/>
        <dbReference type="ChEBI" id="CHEBI:15378"/>
        <dbReference type="ChEBI" id="CHEBI:57618"/>
        <dbReference type="ChEBI" id="CHEBI:58210"/>
        <dbReference type="ChEBI" id="CHEBI:58483"/>
        <dbReference type="ChEBI" id="CHEBI:128753"/>
        <dbReference type="EC" id="1.17.7.3"/>
    </reaction>
</comment>
<comment type="cofactor">
    <cofactor evidence="1">
        <name>[4Fe-4S] cluster</name>
        <dbReference type="ChEBI" id="CHEBI:49883"/>
    </cofactor>
    <text evidence="1">Binds 1 [4Fe-4S] cluster.</text>
</comment>
<comment type="pathway">
    <text evidence="1">Isoprenoid biosynthesis; isopentenyl diphosphate biosynthesis via DXP pathway; isopentenyl diphosphate from 1-deoxy-D-xylulose 5-phosphate: step 5/6.</text>
</comment>
<comment type="similarity">
    <text evidence="1">Belongs to the IspG family.</text>
</comment>